<accession>A3QBP0</accession>
<comment type="function">
    <text evidence="1">Required for insertion of 4Fe-4S clusters for at least IspG.</text>
</comment>
<comment type="cofactor">
    <cofactor evidence="1">
        <name>iron-sulfur cluster</name>
        <dbReference type="ChEBI" id="CHEBI:30408"/>
    </cofactor>
    <text evidence="1">Binds 1 iron-sulfur cluster per subunit.</text>
</comment>
<comment type="subunit">
    <text evidence="1">Homodimer.</text>
</comment>
<comment type="similarity">
    <text evidence="1">Belongs to the HesB/IscA family.</text>
</comment>
<gene>
    <name evidence="1" type="primary">erpA</name>
    <name type="ordered locus">Shew_1017</name>
</gene>
<reference key="1">
    <citation type="submission" date="2007-03" db="EMBL/GenBank/DDBJ databases">
        <title>Complete sequence of Shewanella loihica PV-4.</title>
        <authorList>
            <consortium name="US DOE Joint Genome Institute"/>
            <person name="Copeland A."/>
            <person name="Lucas S."/>
            <person name="Lapidus A."/>
            <person name="Barry K."/>
            <person name="Detter J.C."/>
            <person name="Glavina del Rio T."/>
            <person name="Hammon N."/>
            <person name="Israni S."/>
            <person name="Dalin E."/>
            <person name="Tice H."/>
            <person name="Pitluck S."/>
            <person name="Chain P."/>
            <person name="Malfatti S."/>
            <person name="Shin M."/>
            <person name="Vergez L."/>
            <person name="Schmutz J."/>
            <person name="Larimer F."/>
            <person name="Land M."/>
            <person name="Hauser L."/>
            <person name="Kyrpides N."/>
            <person name="Mikhailova N."/>
            <person name="Romine M.F."/>
            <person name="Serres G."/>
            <person name="Fredrickson J."/>
            <person name="Tiedje J."/>
            <person name="Richardson P."/>
        </authorList>
    </citation>
    <scope>NUCLEOTIDE SEQUENCE [LARGE SCALE GENOMIC DNA]</scope>
    <source>
        <strain>ATCC BAA-1088 / PV-4</strain>
    </source>
</reference>
<sequence>MTEQAEDTMPIRFTDAAAAKVKTLLEEEQNDALKLRVYVTGGGCSGFQYGFTFDEKVNEGDFTVEKQGVQLVVDPMSLQYLVGGEVDYTSGLEGSRFFVKNPNATTTCGCGASFSV</sequence>
<proteinExistence type="inferred from homology"/>
<keyword id="KW-0408">Iron</keyword>
<keyword id="KW-0411">Iron-sulfur</keyword>
<keyword id="KW-0479">Metal-binding</keyword>
<keyword id="KW-1185">Reference proteome</keyword>
<protein>
    <recommendedName>
        <fullName evidence="1">Iron-sulfur cluster insertion protein ErpA</fullName>
    </recommendedName>
</protein>
<dbReference type="EMBL" id="CP000606">
    <property type="protein sequence ID" value="ABO22888.1"/>
    <property type="molecule type" value="Genomic_DNA"/>
</dbReference>
<dbReference type="RefSeq" id="WP_011864821.1">
    <property type="nucleotide sequence ID" value="NC_009092.1"/>
</dbReference>
<dbReference type="SMR" id="A3QBP0"/>
<dbReference type="STRING" id="323850.Shew_1017"/>
<dbReference type="KEGG" id="slo:Shew_1017"/>
<dbReference type="eggNOG" id="COG0316">
    <property type="taxonomic scope" value="Bacteria"/>
</dbReference>
<dbReference type="HOGENOM" id="CLU_069054_5_3_6"/>
<dbReference type="OrthoDB" id="9801228at2"/>
<dbReference type="Proteomes" id="UP000001558">
    <property type="component" value="Chromosome"/>
</dbReference>
<dbReference type="GO" id="GO:0005829">
    <property type="term" value="C:cytosol"/>
    <property type="evidence" value="ECO:0007669"/>
    <property type="project" value="TreeGrafter"/>
</dbReference>
<dbReference type="GO" id="GO:0051537">
    <property type="term" value="F:2 iron, 2 sulfur cluster binding"/>
    <property type="evidence" value="ECO:0007669"/>
    <property type="project" value="UniProtKB-ARBA"/>
</dbReference>
<dbReference type="GO" id="GO:0051539">
    <property type="term" value="F:4 iron, 4 sulfur cluster binding"/>
    <property type="evidence" value="ECO:0007669"/>
    <property type="project" value="TreeGrafter"/>
</dbReference>
<dbReference type="GO" id="GO:0005506">
    <property type="term" value="F:iron ion binding"/>
    <property type="evidence" value="ECO:0007669"/>
    <property type="project" value="UniProtKB-UniRule"/>
</dbReference>
<dbReference type="GO" id="GO:0016226">
    <property type="term" value="P:iron-sulfur cluster assembly"/>
    <property type="evidence" value="ECO:0007669"/>
    <property type="project" value="UniProtKB-UniRule"/>
</dbReference>
<dbReference type="FunFam" id="2.60.300.12:FF:000002">
    <property type="entry name" value="Iron-sulfur cluster insertion protein ErpA"/>
    <property type="match status" value="1"/>
</dbReference>
<dbReference type="Gene3D" id="2.60.300.12">
    <property type="entry name" value="HesB-like domain"/>
    <property type="match status" value="1"/>
</dbReference>
<dbReference type="HAMAP" id="MF_01380">
    <property type="entry name" value="Fe_S_insert_ErpA"/>
    <property type="match status" value="1"/>
</dbReference>
<dbReference type="InterPro" id="IPR000361">
    <property type="entry name" value="FeS_biogenesis"/>
</dbReference>
<dbReference type="InterPro" id="IPR016092">
    <property type="entry name" value="FeS_cluster_insertion"/>
</dbReference>
<dbReference type="InterPro" id="IPR017870">
    <property type="entry name" value="FeS_cluster_insertion_CS"/>
</dbReference>
<dbReference type="InterPro" id="IPR023063">
    <property type="entry name" value="FeS_cluster_insertion_RrpA"/>
</dbReference>
<dbReference type="InterPro" id="IPR035903">
    <property type="entry name" value="HesB-like_dom_sf"/>
</dbReference>
<dbReference type="NCBIfam" id="TIGR00049">
    <property type="entry name" value="iron-sulfur cluster assembly accessory protein"/>
    <property type="match status" value="1"/>
</dbReference>
<dbReference type="NCBIfam" id="NF010147">
    <property type="entry name" value="PRK13623.1"/>
    <property type="match status" value="1"/>
</dbReference>
<dbReference type="PANTHER" id="PTHR43011">
    <property type="entry name" value="IRON-SULFUR CLUSTER ASSEMBLY 2 HOMOLOG, MITOCHONDRIAL"/>
    <property type="match status" value="1"/>
</dbReference>
<dbReference type="PANTHER" id="PTHR43011:SF1">
    <property type="entry name" value="IRON-SULFUR CLUSTER ASSEMBLY 2 HOMOLOG, MITOCHONDRIAL"/>
    <property type="match status" value="1"/>
</dbReference>
<dbReference type="Pfam" id="PF01521">
    <property type="entry name" value="Fe-S_biosyn"/>
    <property type="match status" value="1"/>
</dbReference>
<dbReference type="SUPFAM" id="SSF89360">
    <property type="entry name" value="HesB-like domain"/>
    <property type="match status" value="1"/>
</dbReference>
<dbReference type="PROSITE" id="PS01152">
    <property type="entry name" value="HESB"/>
    <property type="match status" value="1"/>
</dbReference>
<feature type="chain" id="PRO_0000311552" description="Iron-sulfur cluster insertion protein ErpA">
    <location>
        <begin position="1"/>
        <end position="116"/>
    </location>
</feature>
<feature type="binding site" evidence="1">
    <location>
        <position position="44"/>
    </location>
    <ligand>
        <name>iron-sulfur cluster</name>
        <dbReference type="ChEBI" id="CHEBI:30408"/>
    </ligand>
</feature>
<feature type="binding site" evidence="1">
    <location>
        <position position="108"/>
    </location>
    <ligand>
        <name>iron-sulfur cluster</name>
        <dbReference type="ChEBI" id="CHEBI:30408"/>
    </ligand>
</feature>
<feature type="binding site" evidence="1">
    <location>
        <position position="110"/>
    </location>
    <ligand>
        <name>iron-sulfur cluster</name>
        <dbReference type="ChEBI" id="CHEBI:30408"/>
    </ligand>
</feature>
<name>ERPA_SHELP</name>
<organism>
    <name type="scientific">Shewanella loihica (strain ATCC BAA-1088 / PV-4)</name>
    <dbReference type="NCBI Taxonomy" id="323850"/>
    <lineage>
        <taxon>Bacteria</taxon>
        <taxon>Pseudomonadati</taxon>
        <taxon>Pseudomonadota</taxon>
        <taxon>Gammaproteobacteria</taxon>
        <taxon>Alteromonadales</taxon>
        <taxon>Shewanellaceae</taxon>
        <taxon>Shewanella</taxon>
    </lineage>
</organism>
<evidence type="ECO:0000255" key="1">
    <source>
        <dbReference type="HAMAP-Rule" id="MF_01380"/>
    </source>
</evidence>